<reference key="1">
    <citation type="submission" date="2005-03" db="EMBL/GenBank/DDBJ databases">
        <title>Annotation of the Saccharomyces cerevisiae RM11-1a genome.</title>
        <authorList>
            <consortium name="The Broad Institute Genome Sequencing Platform"/>
            <person name="Birren B.W."/>
            <person name="Lander E.S."/>
            <person name="Galagan J.E."/>
            <person name="Nusbaum C."/>
            <person name="Devon K."/>
            <person name="Cuomo C."/>
            <person name="Jaffe D.B."/>
            <person name="Butler J."/>
            <person name="Alvarez P."/>
            <person name="Gnerre S."/>
            <person name="Grabherr M."/>
            <person name="Kleber M."/>
            <person name="Mauceli E.W."/>
            <person name="Brockman W."/>
            <person name="MacCallum I.A."/>
            <person name="Rounsley S."/>
            <person name="Young S.K."/>
            <person name="LaButti K."/>
            <person name="Pushparaj V."/>
            <person name="DeCaprio D."/>
            <person name="Crawford M."/>
            <person name="Koehrsen M."/>
            <person name="Engels R."/>
            <person name="Montgomery P."/>
            <person name="Pearson M."/>
            <person name="Howarth C."/>
            <person name="Larson L."/>
            <person name="Luoma S."/>
            <person name="White J."/>
            <person name="O'Leary S."/>
            <person name="Kodira C.D."/>
            <person name="Zeng Q."/>
            <person name="Yandava C."/>
            <person name="Alvarado L."/>
            <person name="Pratt S."/>
            <person name="Kruglyak L."/>
        </authorList>
    </citation>
    <scope>NUCLEOTIDE SEQUENCE [LARGE SCALE GENOMIC DNA]</scope>
    <source>
        <strain>RM11-1a</strain>
    </source>
</reference>
<keyword id="KW-0472">Membrane</keyword>
<keyword id="KW-0496">Mitochondrion</keyword>
<keyword id="KW-0999">Mitochondrion inner membrane</keyword>
<keyword id="KW-0677">Repeat</keyword>
<keyword id="KW-0812">Transmembrane</keyword>
<keyword id="KW-1133">Transmembrane helix</keyword>
<keyword id="KW-0813">Transport</keyword>
<dbReference type="EMBL" id="CH408043">
    <property type="protein sequence ID" value="EDV08388.1"/>
    <property type="molecule type" value="Genomic_DNA"/>
</dbReference>
<dbReference type="SMR" id="B3LH09"/>
<dbReference type="HOGENOM" id="CLU_015166_0_3_1"/>
<dbReference type="OrthoDB" id="23533at4893"/>
<dbReference type="Proteomes" id="UP000008335">
    <property type="component" value="Unassembled WGS sequence"/>
</dbReference>
<dbReference type="GO" id="GO:0005743">
    <property type="term" value="C:mitochondrial inner membrane"/>
    <property type="evidence" value="ECO:0007669"/>
    <property type="project" value="UniProtKB-SubCell"/>
</dbReference>
<dbReference type="GO" id="GO:0015187">
    <property type="term" value="F:glycine transmembrane transporter activity"/>
    <property type="evidence" value="ECO:0007669"/>
    <property type="project" value="UniProtKB-UniRule"/>
</dbReference>
<dbReference type="GO" id="GO:1904983">
    <property type="term" value="P:glycine import into mitochondrion"/>
    <property type="evidence" value="ECO:0007669"/>
    <property type="project" value="UniProtKB-UniRule"/>
</dbReference>
<dbReference type="FunFam" id="1.50.40.10:FF:000103">
    <property type="entry name" value="Mitochondrial glycine transporter"/>
    <property type="match status" value="1"/>
</dbReference>
<dbReference type="Gene3D" id="1.50.40.10">
    <property type="entry name" value="Mitochondrial carrier domain"/>
    <property type="match status" value="1"/>
</dbReference>
<dbReference type="HAMAP" id="MF_03064">
    <property type="entry name" value="SLC25A38"/>
    <property type="match status" value="1"/>
</dbReference>
<dbReference type="InterPro" id="IPR030847">
    <property type="entry name" value="Hem25/SLC25A38"/>
</dbReference>
<dbReference type="InterPro" id="IPR002067">
    <property type="entry name" value="Mit_carrier"/>
</dbReference>
<dbReference type="InterPro" id="IPR018108">
    <property type="entry name" value="Mitochondrial_sb/sol_carrier"/>
</dbReference>
<dbReference type="InterPro" id="IPR023395">
    <property type="entry name" value="Mt_carrier_dom_sf"/>
</dbReference>
<dbReference type="PANTHER" id="PTHR46181">
    <property type="entry name" value="MITOCHONDRIAL GLYCINE TRANSPORTER"/>
    <property type="match status" value="1"/>
</dbReference>
<dbReference type="PANTHER" id="PTHR46181:SF3">
    <property type="entry name" value="MITOCHONDRIAL GLYCINE TRANSPORTER"/>
    <property type="match status" value="1"/>
</dbReference>
<dbReference type="Pfam" id="PF00153">
    <property type="entry name" value="Mito_carr"/>
    <property type="match status" value="3"/>
</dbReference>
<dbReference type="PRINTS" id="PR00926">
    <property type="entry name" value="MITOCARRIER"/>
</dbReference>
<dbReference type="SUPFAM" id="SSF103506">
    <property type="entry name" value="Mitochondrial carrier"/>
    <property type="match status" value="1"/>
</dbReference>
<dbReference type="PROSITE" id="PS50920">
    <property type="entry name" value="SOLCAR"/>
    <property type="match status" value="3"/>
</dbReference>
<evidence type="ECO:0000250" key="1">
    <source>
        <dbReference type="UniProtKB" id="Q96DW6"/>
    </source>
</evidence>
<evidence type="ECO:0000255" key="2">
    <source>
        <dbReference type="HAMAP-Rule" id="MF_03064"/>
    </source>
</evidence>
<organism>
    <name type="scientific">Saccharomyces cerevisiae (strain RM11-1a)</name>
    <name type="common">Baker's yeast</name>
    <dbReference type="NCBI Taxonomy" id="285006"/>
    <lineage>
        <taxon>Eukaryota</taxon>
        <taxon>Fungi</taxon>
        <taxon>Dikarya</taxon>
        <taxon>Ascomycota</taxon>
        <taxon>Saccharomycotina</taxon>
        <taxon>Saccharomycetes</taxon>
        <taxon>Saccharomycetales</taxon>
        <taxon>Saccharomycetaceae</taxon>
        <taxon>Saccharomyces</taxon>
    </lineage>
</organism>
<sequence length="307" mass="34170">MTEQATKPRNSSHLIGGFFGGLTSAVALQPLDLLKTRIQQDKKATLWKNLKEIDSPLQLWRGTLPSALRTSIGSALYLSCLNLMRSSLAKRRNAVPSLTNDSNIVYNKSSSLPRLTMYENLLTGAFARGLVGYITMPITVIKVRYESTLYNYSSLKEAITHIYTKEGLFGFFRGFGATCLRDAPYAGLYVLLYEKSKQLLPMVLPSRFIHYNPEGGFTTYTSTTVNTTSAVLSASLATTVTAPFDTIKTRMQLEPSKFTNSFNTFTSIVKNENVLKLFSGLSMRLARKALSAGIAWGIYEELVKRFM</sequence>
<proteinExistence type="inferred from homology"/>
<gene>
    <name type="ORF">SCRG_00613</name>
</gene>
<comment type="function">
    <text evidence="2">Mitochondrial glycine transporter that imports glycine into the mitochondrial matrix. Plays an important role in providing glycine for the first enzymatic step in heme biosynthesis, the condensation of glycine with succinyl-CoA to produce 5-aminolevulinate (ALA) in the mitochondrial matrix.</text>
</comment>
<comment type="catalytic activity">
    <reaction evidence="1">
        <text>glycine(in) = glycine(out)</text>
        <dbReference type="Rhea" id="RHEA:70715"/>
        <dbReference type="ChEBI" id="CHEBI:57305"/>
    </reaction>
</comment>
<comment type="subcellular location">
    <subcellularLocation>
        <location evidence="2">Mitochondrion inner membrane</location>
        <topology evidence="2">Multi-pass membrane protein</topology>
    </subcellularLocation>
</comment>
<comment type="similarity">
    <text evidence="2">Belongs to the mitochondrial carrier (TC 2.A.29) family. SLC25A38 subfamily.</text>
</comment>
<name>S2538_YEAS1</name>
<protein>
    <recommendedName>
        <fullName evidence="2">Mitochondrial glycine transporter</fullName>
    </recommendedName>
    <alternativeName>
        <fullName evidence="2">Solute carrier family 25 member 38 homolog</fullName>
    </alternativeName>
</protein>
<feature type="chain" id="PRO_0000378947" description="Mitochondrial glycine transporter">
    <location>
        <begin position="1"/>
        <end position="307"/>
    </location>
</feature>
<feature type="transmembrane region" description="Helical; Name=1" evidence="2">
    <location>
        <begin position="14"/>
        <end position="39"/>
    </location>
</feature>
<feature type="transmembrane region" description="Helical; Name=2" evidence="2">
    <location>
        <begin position="62"/>
        <end position="88"/>
    </location>
</feature>
<feature type="transmembrane region" description="Helical; Name=3" evidence="2">
    <location>
        <begin position="121"/>
        <end position="146"/>
    </location>
</feature>
<feature type="transmembrane region" description="Helical; Name=4" evidence="2">
    <location>
        <begin position="174"/>
        <end position="197"/>
    </location>
</feature>
<feature type="transmembrane region" description="Helical; Name=5" evidence="2">
    <location>
        <begin position="225"/>
        <end position="251"/>
    </location>
</feature>
<feature type="transmembrane region" description="Helical; Name=6" evidence="2">
    <location>
        <begin position="280"/>
        <end position="298"/>
    </location>
</feature>
<feature type="repeat" description="Solcar 1" evidence="2">
    <location>
        <begin position="8"/>
        <end position="87"/>
    </location>
</feature>
<feature type="repeat" description="Solcar 2" evidence="2">
    <location>
        <begin position="115"/>
        <end position="199"/>
    </location>
</feature>
<feature type="repeat" description="Solcar 3" evidence="2">
    <location>
        <begin position="221"/>
        <end position="305"/>
    </location>
</feature>
<accession>B3LH09</accession>